<proteinExistence type="inferred from homology"/>
<name>LIPA_AGRFC</name>
<keyword id="KW-0004">4Fe-4S</keyword>
<keyword id="KW-0963">Cytoplasm</keyword>
<keyword id="KW-0408">Iron</keyword>
<keyword id="KW-0411">Iron-sulfur</keyword>
<keyword id="KW-0479">Metal-binding</keyword>
<keyword id="KW-1185">Reference proteome</keyword>
<keyword id="KW-0949">S-adenosyl-L-methionine</keyword>
<keyword id="KW-0808">Transferase</keyword>
<evidence type="ECO:0000255" key="1">
    <source>
        <dbReference type="HAMAP-Rule" id="MF_00206"/>
    </source>
</evidence>
<evidence type="ECO:0000255" key="2">
    <source>
        <dbReference type="PROSITE-ProRule" id="PRU01266"/>
    </source>
</evidence>
<evidence type="ECO:0000256" key="3">
    <source>
        <dbReference type="SAM" id="MobiDB-lite"/>
    </source>
</evidence>
<dbReference type="EC" id="2.8.1.8" evidence="1"/>
<dbReference type="EMBL" id="AE007869">
    <property type="protein sequence ID" value="AAK87227.1"/>
    <property type="molecule type" value="Genomic_DNA"/>
</dbReference>
<dbReference type="PIR" id="AD2753">
    <property type="entry name" value="AD2753"/>
</dbReference>
<dbReference type="PIR" id="B97534">
    <property type="entry name" value="B97534"/>
</dbReference>
<dbReference type="RefSeq" id="NP_354442.1">
    <property type="nucleotide sequence ID" value="NC_003062.2"/>
</dbReference>
<dbReference type="RefSeq" id="WP_010971620.1">
    <property type="nucleotide sequence ID" value="NC_003062.2"/>
</dbReference>
<dbReference type="SMR" id="Q8UFG1"/>
<dbReference type="STRING" id="176299.Atu1436"/>
<dbReference type="EnsemblBacteria" id="AAK87227">
    <property type="protein sequence ID" value="AAK87227"/>
    <property type="gene ID" value="Atu1436"/>
</dbReference>
<dbReference type="GeneID" id="1133474"/>
<dbReference type="KEGG" id="atu:Atu1436"/>
<dbReference type="PATRIC" id="fig|176299.10.peg.1457"/>
<dbReference type="eggNOG" id="COG0320">
    <property type="taxonomic scope" value="Bacteria"/>
</dbReference>
<dbReference type="HOGENOM" id="CLU_033144_2_1_5"/>
<dbReference type="OrthoDB" id="9787898at2"/>
<dbReference type="PhylomeDB" id="Q8UFG1"/>
<dbReference type="BioCyc" id="AGRO:ATU1436-MONOMER"/>
<dbReference type="UniPathway" id="UPA00538">
    <property type="reaction ID" value="UER00593"/>
</dbReference>
<dbReference type="Proteomes" id="UP000000813">
    <property type="component" value="Chromosome circular"/>
</dbReference>
<dbReference type="GO" id="GO:0005737">
    <property type="term" value="C:cytoplasm"/>
    <property type="evidence" value="ECO:0007669"/>
    <property type="project" value="UniProtKB-SubCell"/>
</dbReference>
<dbReference type="GO" id="GO:0051539">
    <property type="term" value="F:4 iron, 4 sulfur cluster binding"/>
    <property type="evidence" value="ECO:0007669"/>
    <property type="project" value="UniProtKB-UniRule"/>
</dbReference>
<dbReference type="GO" id="GO:0016992">
    <property type="term" value="F:lipoate synthase activity"/>
    <property type="evidence" value="ECO:0007669"/>
    <property type="project" value="UniProtKB-UniRule"/>
</dbReference>
<dbReference type="GO" id="GO:0046872">
    <property type="term" value="F:metal ion binding"/>
    <property type="evidence" value="ECO:0007669"/>
    <property type="project" value="UniProtKB-KW"/>
</dbReference>
<dbReference type="CDD" id="cd01335">
    <property type="entry name" value="Radical_SAM"/>
    <property type="match status" value="1"/>
</dbReference>
<dbReference type="FunFam" id="3.20.20.70:FF:000186">
    <property type="entry name" value="Lipoyl synthase"/>
    <property type="match status" value="1"/>
</dbReference>
<dbReference type="Gene3D" id="3.20.20.70">
    <property type="entry name" value="Aldolase class I"/>
    <property type="match status" value="1"/>
</dbReference>
<dbReference type="HAMAP" id="MF_00206">
    <property type="entry name" value="Lipoyl_synth"/>
    <property type="match status" value="1"/>
</dbReference>
<dbReference type="InterPro" id="IPR013785">
    <property type="entry name" value="Aldolase_TIM"/>
</dbReference>
<dbReference type="InterPro" id="IPR006638">
    <property type="entry name" value="Elp3/MiaA/NifB-like_rSAM"/>
</dbReference>
<dbReference type="InterPro" id="IPR031691">
    <property type="entry name" value="LIAS_N"/>
</dbReference>
<dbReference type="InterPro" id="IPR003698">
    <property type="entry name" value="Lipoyl_synth"/>
</dbReference>
<dbReference type="InterPro" id="IPR007197">
    <property type="entry name" value="rSAM"/>
</dbReference>
<dbReference type="NCBIfam" id="TIGR00510">
    <property type="entry name" value="lipA"/>
    <property type="match status" value="1"/>
</dbReference>
<dbReference type="NCBIfam" id="NF004019">
    <property type="entry name" value="PRK05481.1"/>
    <property type="match status" value="1"/>
</dbReference>
<dbReference type="NCBIfam" id="NF009544">
    <property type="entry name" value="PRK12928.1"/>
    <property type="match status" value="1"/>
</dbReference>
<dbReference type="PANTHER" id="PTHR10949">
    <property type="entry name" value="LIPOYL SYNTHASE"/>
    <property type="match status" value="1"/>
</dbReference>
<dbReference type="PANTHER" id="PTHR10949:SF0">
    <property type="entry name" value="LIPOYL SYNTHASE, MITOCHONDRIAL"/>
    <property type="match status" value="1"/>
</dbReference>
<dbReference type="Pfam" id="PF16881">
    <property type="entry name" value="LIAS_N"/>
    <property type="match status" value="1"/>
</dbReference>
<dbReference type="Pfam" id="PF04055">
    <property type="entry name" value="Radical_SAM"/>
    <property type="match status" value="1"/>
</dbReference>
<dbReference type="PIRSF" id="PIRSF005963">
    <property type="entry name" value="Lipoyl_synth"/>
    <property type="match status" value="1"/>
</dbReference>
<dbReference type="SFLD" id="SFLDF00271">
    <property type="entry name" value="lipoyl_synthase"/>
    <property type="match status" value="1"/>
</dbReference>
<dbReference type="SFLD" id="SFLDG01058">
    <property type="entry name" value="lipoyl_synthase_like"/>
    <property type="match status" value="1"/>
</dbReference>
<dbReference type="SMART" id="SM00729">
    <property type="entry name" value="Elp3"/>
    <property type="match status" value="1"/>
</dbReference>
<dbReference type="SUPFAM" id="SSF102114">
    <property type="entry name" value="Radical SAM enzymes"/>
    <property type="match status" value="1"/>
</dbReference>
<dbReference type="PROSITE" id="PS51918">
    <property type="entry name" value="RADICAL_SAM"/>
    <property type="match status" value="1"/>
</dbReference>
<reference key="1">
    <citation type="journal article" date="2001" name="Science">
        <title>The genome of the natural genetic engineer Agrobacterium tumefaciens C58.</title>
        <authorList>
            <person name="Wood D.W."/>
            <person name="Setubal J.C."/>
            <person name="Kaul R."/>
            <person name="Monks D.E."/>
            <person name="Kitajima J.P."/>
            <person name="Okura V.K."/>
            <person name="Zhou Y."/>
            <person name="Chen L."/>
            <person name="Wood G.E."/>
            <person name="Almeida N.F. Jr."/>
            <person name="Woo L."/>
            <person name="Chen Y."/>
            <person name="Paulsen I.T."/>
            <person name="Eisen J.A."/>
            <person name="Karp P.D."/>
            <person name="Bovee D. Sr."/>
            <person name="Chapman P."/>
            <person name="Clendenning J."/>
            <person name="Deatherage G."/>
            <person name="Gillet W."/>
            <person name="Grant C."/>
            <person name="Kutyavin T."/>
            <person name="Levy R."/>
            <person name="Li M.-J."/>
            <person name="McClelland E."/>
            <person name="Palmieri A."/>
            <person name="Raymond C."/>
            <person name="Rouse G."/>
            <person name="Saenphimmachak C."/>
            <person name="Wu Z."/>
            <person name="Romero P."/>
            <person name="Gordon D."/>
            <person name="Zhang S."/>
            <person name="Yoo H."/>
            <person name="Tao Y."/>
            <person name="Biddle P."/>
            <person name="Jung M."/>
            <person name="Krespan W."/>
            <person name="Perry M."/>
            <person name="Gordon-Kamm B."/>
            <person name="Liao L."/>
            <person name="Kim S."/>
            <person name="Hendrick C."/>
            <person name="Zhao Z.-Y."/>
            <person name="Dolan M."/>
            <person name="Chumley F."/>
            <person name="Tingey S.V."/>
            <person name="Tomb J.-F."/>
            <person name="Gordon M.P."/>
            <person name="Olson M.V."/>
            <person name="Nester E.W."/>
        </authorList>
    </citation>
    <scope>NUCLEOTIDE SEQUENCE [LARGE SCALE GENOMIC DNA]</scope>
    <source>
        <strain>C58 / ATCC 33970</strain>
    </source>
</reference>
<reference key="2">
    <citation type="journal article" date="2001" name="Science">
        <title>Genome sequence of the plant pathogen and biotechnology agent Agrobacterium tumefaciens C58.</title>
        <authorList>
            <person name="Goodner B."/>
            <person name="Hinkle G."/>
            <person name="Gattung S."/>
            <person name="Miller N."/>
            <person name="Blanchard M."/>
            <person name="Qurollo B."/>
            <person name="Goldman B.S."/>
            <person name="Cao Y."/>
            <person name="Askenazi M."/>
            <person name="Halling C."/>
            <person name="Mullin L."/>
            <person name="Houmiel K."/>
            <person name="Gordon J."/>
            <person name="Vaudin M."/>
            <person name="Iartchouk O."/>
            <person name="Epp A."/>
            <person name="Liu F."/>
            <person name="Wollam C."/>
            <person name="Allinger M."/>
            <person name="Doughty D."/>
            <person name="Scott C."/>
            <person name="Lappas C."/>
            <person name="Markelz B."/>
            <person name="Flanagan C."/>
            <person name="Crowell C."/>
            <person name="Gurson J."/>
            <person name="Lomo C."/>
            <person name="Sear C."/>
            <person name="Strub G."/>
            <person name="Cielo C."/>
            <person name="Slater S."/>
        </authorList>
    </citation>
    <scope>NUCLEOTIDE SEQUENCE [LARGE SCALE GENOMIC DNA]</scope>
    <source>
        <strain>C58 / ATCC 33970</strain>
    </source>
</reference>
<feature type="chain" id="PRO_0000102281" description="Lipoyl synthase">
    <location>
        <begin position="1"/>
        <end position="323"/>
    </location>
</feature>
<feature type="domain" description="Radical SAM core" evidence="2">
    <location>
        <begin position="73"/>
        <end position="289"/>
    </location>
</feature>
<feature type="region of interest" description="Disordered" evidence="3">
    <location>
        <begin position="1"/>
        <end position="27"/>
    </location>
</feature>
<feature type="binding site" evidence="1">
    <location>
        <position position="61"/>
    </location>
    <ligand>
        <name>[4Fe-4S] cluster</name>
        <dbReference type="ChEBI" id="CHEBI:49883"/>
        <label>1</label>
    </ligand>
</feature>
<feature type="binding site" evidence="1">
    <location>
        <position position="66"/>
    </location>
    <ligand>
        <name>[4Fe-4S] cluster</name>
        <dbReference type="ChEBI" id="CHEBI:49883"/>
        <label>1</label>
    </ligand>
</feature>
<feature type="binding site" evidence="1">
    <location>
        <position position="72"/>
    </location>
    <ligand>
        <name>[4Fe-4S] cluster</name>
        <dbReference type="ChEBI" id="CHEBI:49883"/>
        <label>1</label>
    </ligand>
</feature>
<feature type="binding site" evidence="1">
    <location>
        <position position="87"/>
    </location>
    <ligand>
        <name>[4Fe-4S] cluster</name>
        <dbReference type="ChEBI" id="CHEBI:49883"/>
        <label>2</label>
        <note>4Fe-4S-S-AdoMet</note>
    </ligand>
</feature>
<feature type="binding site" evidence="1">
    <location>
        <position position="91"/>
    </location>
    <ligand>
        <name>[4Fe-4S] cluster</name>
        <dbReference type="ChEBI" id="CHEBI:49883"/>
        <label>2</label>
        <note>4Fe-4S-S-AdoMet</note>
    </ligand>
</feature>
<feature type="binding site" evidence="1">
    <location>
        <position position="94"/>
    </location>
    <ligand>
        <name>[4Fe-4S] cluster</name>
        <dbReference type="ChEBI" id="CHEBI:49883"/>
        <label>2</label>
        <note>4Fe-4S-S-AdoMet</note>
    </ligand>
</feature>
<feature type="binding site" evidence="1">
    <location>
        <position position="300"/>
    </location>
    <ligand>
        <name>[4Fe-4S] cluster</name>
        <dbReference type="ChEBI" id="CHEBI:49883"/>
        <label>1</label>
    </ligand>
</feature>
<gene>
    <name evidence="1" type="primary">lipA</name>
    <name type="ordered locus">Atu1436</name>
    <name type="ORF">AGR_C_2646</name>
</gene>
<organism>
    <name type="scientific">Agrobacterium fabrum (strain C58 / ATCC 33970)</name>
    <name type="common">Agrobacterium tumefaciens (strain C58)</name>
    <dbReference type="NCBI Taxonomy" id="176299"/>
    <lineage>
        <taxon>Bacteria</taxon>
        <taxon>Pseudomonadati</taxon>
        <taxon>Pseudomonadota</taxon>
        <taxon>Alphaproteobacteria</taxon>
        <taxon>Hyphomicrobiales</taxon>
        <taxon>Rhizobiaceae</taxon>
        <taxon>Rhizobium/Agrobacterium group</taxon>
        <taxon>Agrobacterium</taxon>
        <taxon>Agrobacterium tumefaciens complex</taxon>
    </lineage>
</organism>
<protein>
    <recommendedName>
        <fullName evidence="1">Lipoyl synthase</fullName>
        <ecNumber evidence="1">2.8.1.8</ecNumber>
    </recommendedName>
    <alternativeName>
        <fullName evidence="1">Lip-syn</fullName>
        <shortName evidence="1">LS</shortName>
    </alternativeName>
    <alternativeName>
        <fullName evidence="1">Lipoate synthase</fullName>
    </alternativeName>
    <alternativeName>
        <fullName evidence="1">Lipoic acid synthase</fullName>
    </alternativeName>
    <alternativeName>
        <fullName evidence="1">Sulfur insertion protein LipA</fullName>
    </alternativeName>
</protein>
<sequence length="323" mass="36341">MVTILDRTSSDEKRIRHPEKAHRPDTEVMRKPEWIRVKAPTSKGYHETRELVRSHKLVTVCEEAGCPNIGECWEKKHATFMIMGEICTRACAFCNVATGKPNALDMDEPENVAKAVKQMGLSHVVITSVDRDDLADGGAEHFEKVIWAIRAASPTTTIEILTPDFLKKPGALERVVAAKPDVFNHNMETVPGNYLTVRPGARYFHSVRLLQRVKELDPTMFTKSGIMVGLGEERNEVLQLMDDLRSADVDFLTIGQYLQPTRKHHKVEAFVTPEEFKSYETVAYAKGFLMVSSSPLTRSSHHAGDDFERLRAAREKKLLAAAE</sequence>
<accession>Q8UFG1</accession>
<comment type="function">
    <text evidence="1">Catalyzes the radical-mediated insertion of two sulfur atoms into the C-6 and C-8 positions of the octanoyl moiety bound to the lipoyl domains of lipoate-dependent enzymes, thereby converting the octanoylated domains into lipoylated derivatives.</text>
</comment>
<comment type="catalytic activity">
    <reaction evidence="1">
        <text>[[Fe-S] cluster scaffold protein carrying a second [4Fe-4S](2+) cluster] + N(6)-octanoyl-L-lysyl-[protein] + 2 oxidized [2Fe-2S]-[ferredoxin] + 2 S-adenosyl-L-methionine + 4 H(+) = [[Fe-S] cluster scaffold protein] + N(6)-[(R)-dihydrolipoyl]-L-lysyl-[protein] + 4 Fe(3+) + 2 hydrogen sulfide + 2 5'-deoxyadenosine + 2 L-methionine + 2 reduced [2Fe-2S]-[ferredoxin]</text>
        <dbReference type="Rhea" id="RHEA:16585"/>
        <dbReference type="Rhea" id="RHEA-COMP:9928"/>
        <dbReference type="Rhea" id="RHEA-COMP:10000"/>
        <dbReference type="Rhea" id="RHEA-COMP:10001"/>
        <dbReference type="Rhea" id="RHEA-COMP:10475"/>
        <dbReference type="Rhea" id="RHEA-COMP:14568"/>
        <dbReference type="Rhea" id="RHEA-COMP:14569"/>
        <dbReference type="ChEBI" id="CHEBI:15378"/>
        <dbReference type="ChEBI" id="CHEBI:17319"/>
        <dbReference type="ChEBI" id="CHEBI:29034"/>
        <dbReference type="ChEBI" id="CHEBI:29919"/>
        <dbReference type="ChEBI" id="CHEBI:33722"/>
        <dbReference type="ChEBI" id="CHEBI:33737"/>
        <dbReference type="ChEBI" id="CHEBI:33738"/>
        <dbReference type="ChEBI" id="CHEBI:57844"/>
        <dbReference type="ChEBI" id="CHEBI:59789"/>
        <dbReference type="ChEBI" id="CHEBI:78809"/>
        <dbReference type="ChEBI" id="CHEBI:83100"/>
        <dbReference type="EC" id="2.8.1.8"/>
    </reaction>
</comment>
<comment type="cofactor">
    <cofactor evidence="1">
        <name>[4Fe-4S] cluster</name>
        <dbReference type="ChEBI" id="CHEBI:49883"/>
    </cofactor>
    <text evidence="1">Binds 2 [4Fe-4S] clusters per subunit. One cluster is coordinated with 3 cysteines and an exchangeable S-adenosyl-L-methionine.</text>
</comment>
<comment type="pathway">
    <text evidence="1">Protein modification; protein lipoylation via endogenous pathway; protein N(6)-(lipoyl)lysine from octanoyl-[acyl-carrier-protein]: step 2/2.</text>
</comment>
<comment type="subcellular location">
    <subcellularLocation>
        <location evidence="1">Cytoplasm</location>
    </subcellularLocation>
</comment>
<comment type="similarity">
    <text evidence="1">Belongs to the radical SAM superfamily. Lipoyl synthase family.</text>
</comment>